<reference evidence="14 16" key="1">
    <citation type="journal article" date="2004" name="Proc. Natl. Acad. Sci. U.S.A.">
        <title>Isolation and characterization of a digoxin transporter and its rat homologue expressed in the kidney.</title>
        <authorList>
            <person name="Mikkaichi T."/>
            <person name="Suzuki T."/>
            <person name="Onogawa T."/>
            <person name="Tanemoto M."/>
            <person name="Mizutamari H."/>
            <person name="Okada M."/>
            <person name="Chaki T."/>
            <person name="Masuda S."/>
            <person name="Tokui T."/>
            <person name="Eto N."/>
            <person name="Abe M."/>
            <person name="Satoh F."/>
            <person name="Unno M."/>
            <person name="Hishinuma T."/>
            <person name="Inui K."/>
            <person name="Ito S."/>
            <person name="Goto J."/>
            <person name="Abe T."/>
        </authorList>
    </citation>
    <scope>NUCLEOTIDE SEQUENCE [MRNA]</scope>
    <scope>FUNCTION</scope>
    <scope>TRANSPORTER ACTIVITY</scope>
    <scope>BIOPHYSICOCHEMICAL PROPERTIES</scope>
    <scope>TISSUE SPECIFICITY</scope>
    <scope>INHIBITION</scope>
    <source>
        <tissue evidence="6">Kidney</tissue>
    </source>
</reference>
<reference evidence="15" key="2">
    <citation type="submission" date="2003-11" db="EMBL/GenBank/DDBJ databases">
        <title>Cloning and characterization of two novel OATP genes on human 5q21.1.</title>
        <authorList>
            <person name="Fu-Zhang W."/>
        </authorList>
    </citation>
    <scope>NUCLEOTIDE SEQUENCE [MRNA]</scope>
</reference>
<reference evidence="17" key="3">
    <citation type="journal article" date="2004" name="Nat. Genet.">
        <title>Complete sequencing and characterization of 21,243 full-length human cDNAs.</title>
        <authorList>
            <person name="Ota T."/>
            <person name="Suzuki Y."/>
            <person name="Nishikawa T."/>
            <person name="Otsuki T."/>
            <person name="Sugiyama T."/>
            <person name="Irie R."/>
            <person name="Wakamatsu A."/>
            <person name="Hayashi K."/>
            <person name="Sato H."/>
            <person name="Nagai K."/>
            <person name="Kimura K."/>
            <person name="Makita H."/>
            <person name="Sekine M."/>
            <person name="Obayashi M."/>
            <person name="Nishi T."/>
            <person name="Shibahara T."/>
            <person name="Tanaka T."/>
            <person name="Ishii S."/>
            <person name="Yamamoto J."/>
            <person name="Saito K."/>
            <person name="Kawai Y."/>
            <person name="Isono Y."/>
            <person name="Nakamura Y."/>
            <person name="Nagahari K."/>
            <person name="Murakami K."/>
            <person name="Yasuda T."/>
            <person name="Iwayanagi T."/>
            <person name="Wagatsuma M."/>
            <person name="Shiratori A."/>
            <person name="Sudo H."/>
            <person name="Hosoiri T."/>
            <person name="Kaku Y."/>
            <person name="Kodaira H."/>
            <person name="Kondo H."/>
            <person name="Sugawara M."/>
            <person name="Takahashi M."/>
            <person name="Kanda K."/>
            <person name="Yokoi T."/>
            <person name="Furuya T."/>
            <person name="Kikkawa E."/>
            <person name="Omura Y."/>
            <person name="Abe K."/>
            <person name="Kamihara K."/>
            <person name="Katsuta N."/>
            <person name="Sato K."/>
            <person name="Tanikawa M."/>
            <person name="Yamazaki M."/>
            <person name="Ninomiya K."/>
            <person name="Ishibashi T."/>
            <person name="Yamashita H."/>
            <person name="Murakawa K."/>
            <person name="Fujimori K."/>
            <person name="Tanai H."/>
            <person name="Kimata M."/>
            <person name="Watanabe M."/>
            <person name="Hiraoka S."/>
            <person name="Chiba Y."/>
            <person name="Ishida S."/>
            <person name="Ono Y."/>
            <person name="Takiguchi S."/>
            <person name="Watanabe S."/>
            <person name="Yosida M."/>
            <person name="Hotuta T."/>
            <person name="Kusano J."/>
            <person name="Kanehori K."/>
            <person name="Takahashi-Fujii A."/>
            <person name="Hara H."/>
            <person name="Tanase T.-O."/>
            <person name="Nomura Y."/>
            <person name="Togiya S."/>
            <person name="Komai F."/>
            <person name="Hara R."/>
            <person name="Takeuchi K."/>
            <person name="Arita M."/>
            <person name="Imose N."/>
            <person name="Musashino K."/>
            <person name="Yuuki H."/>
            <person name="Oshima A."/>
            <person name="Sasaki N."/>
            <person name="Aotsuka S."/>
            <person name="Yoshikawa Y."/>
            <person name="Matsunawa H."/>
            <person name="Ichihara T."/>
            <person name="Shiohata N."/>
            <person name="Sano S."/>
            <person name="Moriya S."/>
            <person name="Momiyama H."/>
            <person name="Satoh N."/>
            <person name="Takami S."/>
            <person name="Terashima Y."/>
            <person name="Suzuki O."/>
            <person name="Nakagawa S."/>
            <person name="Senoh A."/>
            <person name="Mizoguchi H."/>
            <person name="Goto Y."/>
            <person name="Shimizu F."/>
            <person name="Wakebe H."/>
            <person name="Hishigaki H."/>
            <person name="Watanabe T."/>
            <person name="Sugiyama A."/>
            <person name="Takemoto M."/>
            <person name="Kawakami B."/>
            <person name="Yamazaki M."/>
            <person name="Watanabe K."/>
            <person name="Kumagai A."/>
            <person name="Itakura S."/>
            <person name="Fukuzumi Y."/>
            <person name="Fujimori Y."/>
            <person name="Komiyama M."/>
            <person name="Tashiro H."/>
            <person name="Tanigami A."/>
            <person name="Fujiwara T."/>
            <person name="Ono T."/>
            <person name="Yamada K."/>
            <person name="Fujii Y."/>
            <person name="Ozaki K."/>
            <person name="Hirao M."/>
            <person name="Ohmori Y."/>
            <person name="Kawabata A."/>
            <person name="Hikiji T."/>
            <person name="Kobatake N."/>
            <person name="Inagaki H."/>
            <person name="Ikema Y."/>
            <person name="Okamoto S."/>
            <person name="Okitani R."/>
            <person name="Kawakami T."/>
            <person name="Noguchi S."/>
            <person name="Itoh T."/>
            <person name="Shigeta K."/>
            <person name="Senba T."/>
            <person name="Matsumura K."/>
            <person name="Nakajima Y."/>
            <person name="Mizuno T."/>
            <person name="Morinaga M."/>
            <person name="Sasaki M."/>
            <person name="Togashi T."/>
            <person name="Oyama M."/>
            <person name="Hata H."/>
            <person name="Watanabe M."/>
            <person name="Komatsu T."/>
            <person name="Mizushima-Sugano J."/>
            <person name="Satoh T."/>
            <person name="Shirai Y."/>
            <person name="Takahashi Y."/>
            <person name="Nakagawa K."/>
            <person name="Okumura K."/>
            <person name="Nagase T."/>
            <person name="Nomura N."/>
            <person name="Kikuchi H."/>
            <person name="Masuho Y."/>
            <person name="Yamashita R."/>
            <person name="Nakai K."/>
            <person name="Yada T."/>
            <person name="Nakamura Y."/>
            <person name="Ohara O."/>
            <person name="Isogai T."/>
            <person name="Sugano S."/>
        </authorList>
    </citation>
    <scope>NUCLEOTIDE SEQUENCE [LARGE SCALE MRNA]</scope>
    <source>
        <tissue evidence="17">Trachea</tissue>
    </source>
</reference>
<reference evidence="15" key="4">
    <citation type="submission" date="2005-09" db="EMBL/GenBank/DDBJ databases">
        <authorList>
            <person name="Mural R.J."/>
            <person name="Istrail S."/>
            <person name="Sutton G.G."/>
            <person name="Florea L."/>
            <person name="Halpern A.L."/>
            <person name="Mobarry C.M."/>
            <person name="Lippert R."/>
            <person name="Walenz B."/>
            <person name="Shatkay H."/>
            <person name="Dew I."/>
            <person name="Miller J.R."/>
            <person name="Flanigan M.J."/>
            <person name="Edwards N.J."/>
            <person name="Bolanos R."/>
            <person name="Fasulo D."/>
            <person name="Halldorsson B.V."/>
            <person name="Hannenhalli S."/>
            <person name="Turner R."/>
            <person name="Yooseph S."/>
            <person name="Lu F."/>
            <person name="Nusskern D.R."/>
            <person name="Shue B.C."/>
            <person name="Zheng X.H."/>
            <person name="Zhong F."/>
            <person name="Delcher A.L."/>
            <person name="Huson D.H."/>
            <person name="Kravitz S.A."/>
            <person name="Mouchard L."/>
            <person name="Reinert K."/>
            <person name="Remington K.A."/>
            <person name="Clark A.G."/>
            <person name="Waterman M.S."/>
            <person name="Eichler E.E."/>
            <person name="Adams M.D."/>
            <person name="Hunkapiller M.W."/>
            <person name="Myers E.W."/>
            <person name="Venter J.C."/>
        </authorList>
    </citation>
    <scope>NUCLEOTIDE SEQUENCE [LARGE SCALE GENOMIC DNA]</scope>
</reference>
<reference key="5">
    <citation type="journal article" date="2009" name="Am. J. Physiol.">
        <title>Mechanisms of pH-gradient driven transport mediated by organic anion polypeptide transporters.</title>
        <authorList>
            <person name="Leuthold S."/>
            <person name="Hagenbuch B."/>
            <person name="Mohebbi N."/>
            <person name="Wagner C.A."/>
            <person name="Meier P.J."/>
            <person name="Stieger B."/>
        </authorList>
    </citation>
    <scope>FUNCTION</scope>
    <scope>TRANSPORTER ACTIVITY</scope>
    <scope>BIOPHYSICOCHEMICAL PROPERTIES</scope>
</reference>
<reference key="6">
    <citation type="journal article" date="2010" name="Drug Metab. Pharmacokinet.">
        <title>Transport of estrone 3-sulfate mediated by organic anion transporter OATP4C1: estrone 3-sulfate binds to the different recognition site for digoxin in OATP4C1.</title>
        <authorList>
            <person name="Yamaguchi H."/>
            <person name="Sugie M."/>
            <person name="Okada M."/>
            <person name="Mikkaichi T."/>
            <person name="Toyohara T."/>
            <person name="Abe T."/>
            <person name="Goto J."/>
            <person name="Hishinuma T."/>
            <person name="Shimada M."/>
            <person name="Mano N."/>
        </authorList>
    </citation>
    <scope>FUNCTION</scope>
    <scope>TRANSPORTER ACTIVITY</scope>
    <scope>BIOPHYSICOCHEMICAL PROPERTIES</scope>
</reference>
<reference key="7">
    <citation type="journal article" date="2019" name="PLoS ONE">
        <title>The renal transport protein OATP4C1 mediates uptake of the uremic toxin asymmetric dimethylarginine (ADMA) and efflux of cardioprotective L-homoarginine.</title>
        <authorList>
            <person name="Taghikhani E."/>
            <person name="Maas R."/>
            <person name="Fromm M.F."/>
            <person name="Koenig J."/>
        </authorList>
    </citation>
    <scope>FUNCTION</scope>
    <scope>TRANSPORTER ACTIVITY</scope>
    <scope>BIOPHYSICOCHEMICAL PROPERTIES</scope>
    <scope>SUBCELLULAR LOCATION</scope>
</reference>
<reference key="8">
    <citation type="journal article" date="2020" name="Amino Acids">
        <title>Vectorial transport of the arginine derivatives asymmetric dimethylarginine (ADMA) and L-homoarginine by OATP4C1 and P-glycoprotein studied in double-transfected MDCK cells.</title>
        <authorList>
            <person name="Taghikhani E."/>
            <person name="Maas R."/>
            <person name="Taudte R.V."/>
            <person name="Gessner A."/>
            <person name="Fromm M.F."/>
            <person name="Koenig J."/>
        </authorList>
    </citation>
    <scope>FUNCTION</scope>
</reference>
<name>SO4C1_HUMAN</name>
<dbReference type="EMBL" id="AF401643">
    <property type="protein sequence ID" value="AAQ03086.1"/>
    <property type="molecule type" value="mRNA"/>
</dbReference>
<dbReference type="EMBL" id="AY273896">
    <property type="protein sequence ID" value="AAP33047.2"/>
    <property type="molecule type" value="mRNA"/>
</dbReference>
<dbReference type="EMBL" id="AK128854">
    <property type="protein sequence ID" value="BAC87647.1"/>
    <property type="molecule type" value="mRNA"/>
</dbReference>
<dbReference type="EMBL" id="CH471086">
    <property type="protein sequence ID" value="EAW49099.1"/>
    <property type="molecule type" value="Genomic_DNA"/>
</dbReference>
<dbReference type="CCDS" id="CCDS34205.1"/>
<dbReference type="RefSeq" id="NP_851322.3">
    <property type="nucleotide sequence ID" value="NM_180991.4"/>
</dbReference>
<dbReference type="SMR" id="Q6ZQN7"/>
<dbReference type="BioGRID" id="131662">
    <property type="interactions" value="43"/>
</dbReference>
<dbReference type="FunCoup" id="Q6ZQN7">
    <property type="interactions" value="72"/>
</dbReference>
<dbReference type="IntAct" id="Q6ZQN7">
    <property type="interactions" value="23"/>
</dbReference>
<dbReference type="STRING" id="9606.ENSP00000309741"/>
<dbReference type="BindingDB" id="Q6ZQN7"/>
<dbReference type="ChEMBL" id="CHEMBL2073690"/>
<dbReference type="DrugBank" id="DB00509">
    <property type="generic name" value="Dextrothyroxine"/>
</dbReference>
<dbReference type="DrugBank" id="DB01396">
    <property type="generic name" value="Digitoxin"/>
</dbReference>
<dbReference type="DrugBank" id="DB00390">
    <property type="generic name" value="Digoxin"/>
</dbReference>
<dbReference type="DrugBank" id="DB01137">
    <property type="generic name" value="Levofloxacin"/>
</dbReference>
<dbReference type="DrugBank" id="DB00279">
    <property type="generic name" value="Liothyronine"/>
</dbReference>
<dbReference type="DrugBank" id="DB01583">
    <property type="generic name" value="Liotrix"/>
</dbReference>
<dbReference type="DrugBank" id="DB00563">
    <property type="generic name" value="Methotrexate"/>
</dbReference>
<dbReference type="DrugBank" id="DB01092">
    <property type="generic name" value="Ouabain"/>
</dbReference>
<dbReference type="DrugBank" id="DB06335">
    <property type="generic name" value="Saxagliptin"/>
</dbReference>
<dbReference type="TCDB" id="2.A.60.1.11">
    <property type="family name" value="the organo anion transporter (oat) family"/>
</dbReference>
<dbReference type="GlyCosmos" id="Q6ZQN7">
    <property type="glycosylation" value="1 site, 1 glycan"/>
</dbReference>
<dbReference type="GlyGen" id="Q6ZQN7">
    <property type="glycosylation" value="2 sites, 3 N-linked glycans (1 site), 1 O-linked glycan (1 site)"/>
</dbReference>
<dbReference type="iPTMnet" id="Q6ZQN7"/>
<dbReference type="PhosphoSitePlus" id="Q6ZQN7"/>
<dbReference type="BioMuta" id="SLCO4C1"/>
<dbReference type="DMDM" id="74749598"/>
<dbReference type="jPOST" id="Q6ZQN7"/>
<dbReference type="MassIVE" id="Q6ZQN7"/>
<dbReference type="PaxDb" id="9606-ENSP00000309741"/>
<dbReference type="PeptideAtlas" id="Q6ZQN7"/>
<dbReference type="ProteomicsDB" id="68081"/>
<dbReference type="Antibodypedia" id="48357">
    <property type="antibodies" value="69 antibodies from 17 providers"/>
</dbReference>
<dbReference type="DNASU" id="353189"/>
<dbReference type="Ensembl" id="ENST00000310954.7">
    <property type="protein sequence ID" value="ENSP00000309741.6"/>
    <property type="gene ID" value="ENSG00000173930.9"/>
</dbReference>
<dbReference type="GeneID" id="353189"/>
<dbReference type="KEGG" id="hsa:353189"/>
<dbReference type="MANE-Select" id="ENST00000310954.7">
    <property type="protein sequence ID" value="ENSP00000309741.6"/>
    <property type="RefSeq nucleotide sequence ID" value="NM_180991.5"/>
    <property type="RefSeq protein sequence ID" value="NP_851322.3"/>
</dbReference>
<dbReference type="UCSC" id="uc003knm.4">
    <property type="organism name" value="human"/>
</dbReference>
<dbReference type="AGR" id="HGNC:23612"/>
<dbReference type="CTD" id="353189"/>
<dbReference type="DisGeNET" id="353189"/>
<dbReference type="GeneCards" id="SLCO4C1"/>
<dbReference type="HGNC" id="HGNC:23612">
    <property type="gene designation" value="SLCO4C1"/>
</dbReference>
<dbReference type="HPA" id="ENSG00000173930">
    <property type="expression patterns" value="Tissue enriched (kidney)"/>
</dbReference>
<dbReference type="MIM" id="609013">
    <property type="type" value="gene"/>
</dbReference>
<dbReference type="neXtProt" id="NX_Q6ZQN7"/>
<dbReference type="OpenTargets" id="ENSG00000173930"/>
<dbReference type="PharmGKB" id="PA134892408"/>
<dbReference type="VEuPathDB" id="HostDB:ENSG00000173930"/>
<dbReference type="eggNOG" id="KOG3626">
    <property type="taxonomic scope" value="Eukaryota"/>
</dbReference>
<dbReference type="GeneTree" id="ENSGT01130000278287"/>
<dbReference type="HOGENOM" id="CLU_008954_2_1_1"/>
<dbReference type="InParanoid" id="Q6ZQN7"/>
<dbReference type="OMA" id="KCENEPF"/>
<dbReference type="OrthoDB" id="5062115at2759"/>
<dbReference type="PAN-GO" id="Q6ZQN7">
    <property type="GO annotations" value="3 GO annotations based on evolutionary models"/>
</dbReference>
<dbReference type="PhylomeDB" id="Q6ZQN7"/>
<dbReference type="TreeFam" id="TF317540"/>
<dbReference type="PathwayCommons" id="Q6ZQN7"/>
<dbReference type="Reactome" id="R-HSA-6798695">
    <property type="pathway name" value="Neutrophil degranulation"/>
</dbReference>
<dbReference type="Reactome" id="R-HSA-879518">
    <property type="pathway name" value="Transport of organic anions"/>
</dbReference>
<dbReference type="SABIO-RK" id="Q6ZQN7"/>
<dbReference type="SignaLink" id="Q6ZQN7"/>
<dbReference type="BioGRID-ORCS" id="353189">
    <property type="hits" value="18 hits in 1151 CRISPR screens"/>
</dbReference>
<dbReference type="GenomeRNAi" id="353189"/>
<dbReference type="Pharos" id="Q6ZQN7">
    <property type="development level" value="Tchem"/>
</dbReference>
<dbReference type="PRO" id="PR:Q6ZQN7"/>
<dbReference type="Proteomes" id="UP000005640">
    <property type="component" value="Chromosome 5"/>
</dbReference>
<dbReference type="RNAct" id="Q6ZQN7">
    <property type="molecule type" value="protein"/>
</dbReference>
<dbReference type="Bgee" id="ENSG00000173930">
    <property type="expression patterns" value="Expressed in nephron tubule and 113 other cell types or tissues"/>
</dbReference>
<dbReference type="GO" id="GO:0035577">
    <property type="term" value="C:azurophil granule membrane"/>
    <property type="evidence" value="ECO:0000304"/>
    <property type="project" value="Reactome"/>
</dbReference>
<dbReference type="GO" id="GO:0016323">
    <property type="term" value="C:basolateral plasma membrane"/>
    <property type="evidence" value="ECO:0000318"/>
    <property type="project" value="GO_Central"/>
</dbReference>
<dbReference type="GO" id="GO:0070062">
    <property type="term" value="C:extracellular exosome"/>
    <property type="evidence" value="ECO:0007005"/>
    <property type="project" value="UniProtKB"/>
</dbReference>
<dbReference type="GO" id="GO:0005886">
    <property type="term" value="C:plasma membrane"/>
    <property type="evidence" value="ECO:0000304"/>
    <property type="project" value="Reactome"/>
</dbReference>
<dbReference type="GO" id="GO:0035579">
    <property type="term" value="C:specific granule membrane"/>
    <property type="evidence" value="ECO:0000304"/>
    <property type="project" value="Reactome"/>
</dbReference>
<dbReference type="GO" id="GO:0008514">
    <property type="term" value="F:organic anion transmembrane transporter activity"/>
    <property type="evidence" value="ECO:0000314"/>
    <property type="project" value="UniProtKB"/>
</dbReference>
<dbReference type="GO" id="GO:0015347">
    <property type="term" value="F:sodium-independent organic anion transmembrane transporter activity"/>
    <property type="evidence" value="ECO:0000318"/>
    <property type="project" value="GO_Central"/>
</dbReference>
<dbReference type="GO" id="GO:0030154">
    <property type="term" value="P:cell differentiation"/>
    <property type="evidence" value="ECO:0007669"/>
    <property type="project" value="UniProtKB-KW"/>
</dbReference>
<dbReference type="GO" id="GO:0006811">
    <property type="term" value="P:monoatomic ion transport"/>
    <property type="evidence" value="ECO:0007669"/>
    <property type="project" value="UniProtKB-KW"/>
</dbReference>
<dbReference type="GO" id="GO:0043252">
    <property type="term" value="P:sodium-independent organic anion transport"/>
    <property type="evidence" value="ECO:0000318"/>
    <property type="project" value="GO_Central"/>
</dbReference>
<dbReference type="GO" id="GO:0007283">
    <property type="term" value="P:spermatogenesis"/>
    <property type="evidence" value="ECO:0007669"/>
    <property type="project" value="UniProtKB-KW"/>
</dbReference>
<dbReference type="CDD" id="cd17463">
    <property type="entry name" value="MFS_SLCO4C_OATP4C"/>
    <property type="match status" value="1"/>
</dbReference>
<dbReference type="Gene3D" id="1.20.1250.20">
    <property type="entry name" value="MFS general substrate transporter like domains"/>
    <property type="match status" value="1"/>
</dbReference>
<dbReference type="InterPro" id="IPR002350">
    <property type="entry name" value="Kazal_dom"/>
</dbReference>
<dbReference type="InterPro" id="IPR036058">
    <property type="entry name" value="Kazal_dom_sf"/>
</dbReference>
<dbReference type="InterPro" id="IPR020846">
    <property type="entry name" value="MFS_dom"/>
</dbReference>
<dbReference type="InterPro" id="IPR036259">
    <property type="entry name" value="MFS_trans_sf"/>
</dbReference>
<dbReference type="InterPro" id="IPR004156">
    <property type="entry name" value="OATP"/>
</dbReference>
<dbReference type="NCBIfam" id="TIGR00805">
    <property type="entry name" value="oat"/>
    <property type="match status" value="1"/>
</dbReference>
<dbReference type="PANTHER" id="PTHR11388">
    <property type="entry name" value="ORGANIC ANION TRANSPORTER"/>
    <property type="match status" value="1"/>
</dbReference>
<dbReference type="PANTHER" id="PTHR11388:SF103">
    <property type="entry name" value="SOLUTE CARRIER ORGANIC ANION TRANSPORTER FAMILY MEMBER 4C1"/>
    <property type="match status" value="1"/>
</dbReference>
<dbReference type="Pfam" id="PF07648">
    <property type="entry name" value="Kazal_2"/>
    <property type="match status" value="1"/>
</dbReference>
<dbReference type="Pfam" id="PF03137">
    <property type="entry name" value="OATP"/>
    <property type="match status" value="1"/>
</dbReference>
<dbReference type="SUPFAM" id="SSF100895">
    <property type="entry name" value="Kazal-type serine protease inhibitors"/>
    <property type="match status" value="1"/>
</dbReference>
<dbReference type="SUPFAM" id="SSF103473">
    <property type="entry name" value="MFS general substrate transporter"/>
    <property type="match status" value="1"/>
</dbReference>
<dbReference type="PROSITE" id="PS51465">
    <property type="entry name" value="KAZAL_2"/>
    <property type="match status" value="1"/>
</dbReference>
<dbReference type="PROSITE" id="PS50850">
    <property type="entry name" value="MFS"/>
    <property type="match status" value="1"/>
</dbReference>
<keyword id="KW-1003">Cell membrane</keyword>
<keyword id="KW-0217">Developmental protein</keyword>
<keyword id="KW-0221">Differentiation</keyword>
<keyword id="KW-1015">Disulfide bond</keyword>
<keyword id="KW-0406">Ion transport</keyword>
<keyword id="KW-0472">Membrane</keyword>
<keyword id="KW-0597">Phosphoprotein</keyword>
<keyword id="KW-1267">Proteomics identification</keyword>
<keyword id="KW-1185">Reference proteome</keyword>
<keyword id="KW-0744">Spermatogenesis</keyword>
<keyword id="KW-0812">Transmembrane</keyword>
<keyword id="KW-1133">Transmembrane helix</keyword>
<keyword id="KW-0813">Transport</keyword>
<proteinExistence type="evidence at protein level"/>
<comment type="function">
    <text evidence="1 2 6 7 8 9 10">Mediates the transport of organic anions such as steroids (estrone 3-sulfate, chenodeoxycholate, glycocholate) and thyroid hormones (3,3',5-triiodo-L-thyronine (T3), L-thyroxine (T4)), in the kidney (PubMed:14993604, PubMed:19129463, PubMed:20610891). Capable of transporting cAMP and pharmacological substances such as digoxin, ouabain and methotrexate (PubMed:14993604). Transport is independent of sodium, chloride ion, and ATP (PubMed:14993604). Transport activity is stimulated by an acidic extracellular environment due to increased substrate affinity to the transporter (PubMed:19129463). The driving force for this transport activity is currently not known (By similarity). The role of hydrogencarbonate (HCO3(-), bicarbonate) as the probable counteranion that exchanges for organic anions is still not well defined (PubMed:19129463). Functions as an uptake transporter at the apical membrane, suggesting a role in renal reabsorption (By similarity). Involved in the renal secretion of the uremic toxin ADMA (N(omega),N(omega)-dimethyl-L-arginine or asymmetrical dimethylarginine), which is associated to cardiovascular events and mortality, and the structurally related amino acids L-arginine and L-homoarginine (a cardioprotective biomarker) (PubMed:30865704). Can act bidirectionally, suggesting a dual protective role of this transport protein; exporting L-homoarginine after being synthesized in proximal tubule cells, and mediating uptake of ADMA from the blood into proximal tubule cells where it is degraded by the enzyme dimethylarginine dimethylaminohydrolase 1 (DDAH1) (PubMed:30865704, PubMed:32642843). May be involved in sperm maturation by enabling directed movement of organic anions and compounds within or between cells (By similarity). This ion-transporting process is important to maintain the strict epididymal homeostasis necessary for sperm maturation (By similarity). May have a role in secretory functions since seminal vesicle epithelial cells are assumed to secrete proteins involved in decapacitation by modifying surface proteins to facilitate the acquisition of the ability to fertilize the egg (By similarity).</text>
</comment>
<comment type="catalytic activity">
    <reaction evidence="7 8">
        <text>estrone 3-sulfate(out) = estrone 3-sulfate(in)</text>
        <dbReference type="Rhea" id="RHEA:71835"/>
        <dbReference type="ChEBI" id="CHEBI:60050"/>
    </reaction>
</comment>
<comment type="catalytic activity">
    <reaction evidence="6 7">
        <text>L-thyroxine(out) = L-thyroxine(in)</text>
        <dbReference type="Rhea" id="RHEA:71819"/>
        <dbReference type="ChEBI" id="CHEBI:58448"/>
    </reaction>
</comment>
<comment type="catalytic activity">
    <reaction evidence="6">
        <text>3,3',5-triiodo-L-thyronine(out) = 3,3',5-triiodo-L-thyronine(in)</text>
        <dbReference type="Rhea" id="RHEA:71811"/>
        <dbReference type="ChEBI" id="CHEBI:533015"/>
    </reaction>
</comment>
<comment type="catalytic activity">
    <reaction evidence="8">
        <text>chenodeoxycholate(out) = chenodeoxycholate(in)</text>
        <dbReference type="Rhea" id="RHEA:75051"/>
        <dbReference type="ChEBI" id="CHEBI:36234"/>
    </reaction>
</comment>
<comment type="catalytic activity">
    <reaction evidence="8">
        <text>glycocholate(out) = glycocholate(in)</text>
        <dbReference type="Rhea" id="RHEA:71851"/>
        <dbReference type="ChEBI" id="CHEBI:29746"/>
    </reaction>
</comment>
<comment type="catalytic activity">
    <reaction evidence="9">
        <text>L-homoarginine(in) = L-homoarginine(out)</text>
        <dbReference type="Rhea" id="RHEA:71203"/>
        <dbReference type="ChEBI" id="CHEBI:143006"/>
    </reaction>
</comment>
<comment type="catalytic activity">
    <reaction evidence="9">
        <text>L-arginine(in) = L-arginine(out)</text>
        <dbReference type="Rhea" id="RHEA:32143"/>
        <dbReference type="ChEBI" id="CHEBI:32682"/>
    </reaction>
</comment>
<comment type="catalytic activity">
    <reaction evidence="9 10">
        <text>N(omega),N(omega)-dimethyl-L-arginine(out) = N(omega),N(omega)-dimethyl-L-arginine(in)</text>
        <dbReference type="Rhea" id="RHEA:75047"/>
        <dbReference type="ChEBI" id="CHEBI:58326"/>
    </reaction>
</comment>
<comment type="biophysicochemical properties">
    <kinetics>
        <KM evidence="6">7.8 uM for digoxin</KM>
        <KM evidence="6">0.38 uM for ouabain</KM>
        <KM evidence="6">5.9 uM for 3,3',5-triiodo-L-thyronine</KM>
        <KM evidence="9">232.1 uM for N(omega),N(omega)-dimethyl-L-arginine</KM>
        <KM evidence="9">49.9 uM for L-homoarginine</KM>
        <KM evidence="9">48.1 uM for L-arginine</KM>
        <KM evidence="8">26.6 uM for estrone 3-sulfate</KM>
    </kinetics>
    <phDependence>
        <text>Optimum pH is 6.5 with estrone 3-sulfate and L-thyroxine (T4) as substrates.</text>
    </phDependence>
</comment>
<comment type="subcellular location">
    <subcellularLocation>
        <location evidence="9">Basolateral cell membrane</location>
        <topology evidence="1">Multi-pass membrane protein</topology>
    </subcellularLocation>
    <text evidence="1 9">Detected at the basolateral membrane of the proximal tubule cell in the kidney.</text>
</comment>
<comment type="tissue specificity">
    <text evidence="6">Predominantly expressed in kidney but also weakly expressed in both fetal liver and kidney.</text>
</comment>
<comment type="miscellaneous">
    <text evidence="6">SLCO4C1-mediated digoxin uptake is inhibited by digoxin itself and related compounds such as ouabain, digitoxin and digoxigenin.</text>
</comment>
<comment type="similarity">
    <text evidence="3">Belongs to the organo anion transporter (TC 2.A.60) family.</text>
</comment>
<gene>
    <name evidence="18 19" type="primary">SLCO4C1</name>
    <name evidence="11" type="synonym">OATP4C1</name>
    <name type="synonym">OATPX</name>
    <name evidence="19" type="synonym">SLC21A20</name>
</gene>
<protein>
    <recommendedName>
        <fullName>Solute carrier organic anion transporter family member 4C1</fullName>
        <shortName evidence="13">SLCO4C1</shortName>
    </recommendedName>
    <alternativeName>
        <fullName>OATP-H</fullName>
    </alternativeName>
    <alternativeName>
        <fullName>Organic anion transporter M1</fullName>
        <shortName>OATP-M1</shortName>
    </alternativeName>
    <alternativeName>
        <fullName evidence="12 13">Organic anion transporting polypeptide 4C1</fullName>
        <shortName evidence="12 13">OATP4C1</shortName>
    </alternativeName>
    <alternativeName>
        <fullName>Solute carrier family 21 member 20</fullName>
    </alternativeName>
</protein>
<organism>
    <name type="scientific">Homo sapiens</name>
    <name type="common">Human</name>
    <dbReference type="NCBI Taxonomy" id="9606"/>
    <lineage>
        <taxon>Eukaryota</taxon>
        <taxon>Metazoa</taxon>
        <taxon>Chordata</taxon>
        <taxon>Craniata</taxon>
        <taxon>Vertebrata</taxon>
        <taxon>Euteleostomi</taxon>
        <taxon>Mammalia</taxon>
        <taxon>Eutheria</taxon>
        <taxon>Euarchontoglires</taxon>
        <taxon>Primates</taxon>
        <taxon>Haplorrhini</taxon>
        <taxon>Catarrhini</taxon>
        <taxon>Hominidae</taxon>
        <taxon>Homo</taxon>
    </lineage>
</organism>
<feature type="chain" id="PRO_0000337151" description="Solute carrier organic anion transporter family member 4C1">
    <location>
        <begin position="1"/>
        <end position="724"/>
    </location>
</feature>
<feature type="topological domain" description="Cytoplasmic" evidence="3">
    <location>
        <begin position="1"/>
        <end position="105"/>
    </location>
</feature>
<feature type="transmembrane region" description="Helical; Name=1" evidence="3">
    <location>
        <begin position="106"/>
        <end position="126"/>
    </location>
</feature>
<feature type="topological domain" description="Extracellular" evidence="3">
    <location>
        <begin position="127"/>
        <end position="145"/>
    </location>
</feature>
<feature type="transmembrane region" description="Helical; Name=2" evidence="3">
    <location>
        <begin position="146"/>
        <end position="166"/>
    </location>
</feature>
<feature type="topological domain" description="Cytoplasmic" evidence="3">
    <location>
        <begin position="167"/>
        <end position="172"/>
    </location>
</feature>
<feature type="transmembrane region" description="Helical; Name=3" evidence="3">
    <location>
        <begin position="173"/>
        <end position="197"/>
    </location>
</feature>
<feature type="topological domain" description="Extracellular" evidence="3">
    <location>
        <begin position="198"/>
        <end position="223"/>
    </location>
</feature>
<feature type="transmembrane region" description="Helical; Name=4" evidence="3">
    <location>
        <begin position="224"/>
        <end position="254"/>
    </location>
</feature>
<feature type="topological domain" description="Cytoplasmic" evidence="3">
    <location>
        <begin position="255"/>
        <end position="274"/>
    </location>
</feature>
<feature type="transmembrane region" description="Helical; Name=5" evidence="3">
    <location>
        <begin position="275"/>
        <end position="295"/>
    </location>
</feature>
<feature type="topological domain" description="Extracellular" evidence="3">
    <location>
        <begin position="296"/>
        <end position="311"/>
    </location>
</feature>
<feature type="transmembrane region" description="Helical; Name=6" evidence="3">
    <location>
        <begin position="312"/>
        <end position="336"/>
    </location>
</feature>
<feature type="topological domain" description="Cytoplasmic" evidence="3">
    <location>
        <begin position="337"/>
        <end position="377"/>
    </location>
</feature>
<feature type="transmembrane region" description="Helical; Name=7" evidence="3">
    <location>
        <begin position="378"/>
        <end position="399"/>
    </location>
</feature>
<feature type="topological domain" description="Extracellular" evidence="3">
    <location>
        <begin position="400"/>
        <end position="419"/>
    </location>
</feature>
<feature type="transmembrane region" description="Helical; Name=8" evidence="3">
    <location>
        <begin position="420"/>
        <end position="443"/>
    </location>
</feature>
<feature type="topological domain" description="Cytoplasmic" evidence="3">
    <location>
        <begin position="444"/>
        <end position="447"/>
    </location>
</feature>
<feature type="transmembrane region" description="Helical; Name=9" evidence="3">
    <location>
        <begin position="448"/>
        <end position="471"/>
    </location>
</feature>
<feature type="topological domain" description="Extracellular" evidence="3">
    <location>
        <begin position="472"/>
        <end position="580"/>
    </location>
</feature>
<feature type="transmembrane region" description="Helical; Name=10" evidence="3">
    <location>
        <begin position="581"/>
        <end position="603"/>
    </location>
</feature>
<feature type="topological domain" description="Cytoplasmic" evidence="3">
    <location>
        <begin position="604"/>
        <end position="612"/>
    </location>
</feature>
<feature type="transmembrane region" description="Helical; Name=11" evidence="3">
    <location>
        <begin position="613"/>
        <end position="638"/>
    </location>
</feature>
<feature type="topological domain" description="Extracellular" evidence="3">
    <location>
        <begin position="639"/>
        <end position="672"/>
    </location>
</feature>
<feature type="transmembrane region" description="Helical; Name=12" evidence="3">
    <location>
        <begin position="673"/>
        <end position="690"/>
    </location>
</feature>
<feature type="topological domain" description="Cytoplasmic" evidence="3">
    <location>
        <begin position="691"/>
        <end position="724"/>
    </location>
</feature>
<feature type="domain" description="Kazal-like" evidence="4">
    <location>
        <begin position="495"/>
        <end position="549"/>
    </location>
</feature>
<feature type="region of interest" description="Disordered" evidence="5">
    <location>
        <begin position="30"/>
        <end position="71"/>
    </location>
</feature>
<feature type="compositionally biased region" description="Low complexity" evidence="5">
    <location>
        <begin position="44"/>
        <end position="60"/>
    </location>
</feature>
<feature type="modified residue" description="Phosphoserine" evidence="1">
    <location>
        <position position="15"/>
    </location>
</feature>
<feature type="modified residue" description="Phosphoserine" evidence="2">
    <location>
        <position position="16"/>
    </location>
</feature>
<feature type="modified residue" description="Phosphoserine" evidence="2">
    <location>
        <position position="24"/>
    </location>
</feature>
<feature type="modified residue" description="Phosphoserine" evidence="2">
    <location>
        <position position="26"/>
    </location>
</feature>
<feature type="modified residue" description="Phosphoserine" evidence="2">
    <location>
        <position position="28"/>
    </location>
</feature>
<feature type="disulfide bond" evidence="4">
    <location>
        <begin position="501"/>
        <end position="530"/>
    </location>
</feature>
<feature type="disulfide bond" evidence="4">
    <location>
        <begin position="507"/>
        <end position="526"/>
    </location>
</feature>
<feature type="disulfide bond" evidence="4">
    <location>
        <begin position="516"/>
        <end position="547"/>
    </location>
</feature>
<feature type="sequence conflict" description="In Ref. 2; AAP33047." evidence="14" ref="2">
    <original>S</original>
    <variation>C</variation>
    <location>
        <position position="672"/>
    </location>
</feature>
<evidence type="ECO:0000250" key="1">
    <source>
        <dbReference type="UniProtKB" id="Q71MB6"/>
    </source>
</evidence>
<evidence type="ECO:0000250" key="2">
    <source>
        <dbReference type="UniProtKB" id="Q8BGD4"/>
    </source>
</evidence>
<evidence type="ECO:0000255" key="3"/>
<evidence type="ECO:0000255" key="4">
    <source>
        <dbReference type="PROSITE-ProRule" id="PRU00798"/>
    </source>
</evidence>
<evidence type="ECO:0000256" key="5">
    <source>
        <dbReference type="SAM" id="MobiDB-lite"/>
    </source>
</evidence>
<evidence type="ECO:0000269" key="6">
    <source>
    </source>
</evidence>
<evidence type="ECO:0000269" key="7">
    <source>
    </source>
</evidence>
<evidence type="ECO:0000269" key="8">
    <source>
    </source>
</evidence>
<evidence type="ECO:0000269" key="9">
    <source>
    </source>
</evidence>
<evidence type="ECO:0000269" key="10">
    <source>
    </source>
</evidence>
<evidence type="ECO:0000303" key="11">
    <source>
    </source>
</evidence>
<evidence type="ECO:0000303" key="12">
    <source>
    </source>
</evidence>
<evidence type="ECO:0000303" key="13">
    <source>
    </source>
</evidence>
<evidence type="ECO:0000305" key="14"/>
<evidence type="ECO:0000312" key="15">
    <source>
        <dbReference type="EMBL" id="AAP33047.2"/>
    </source>
</evidence>
<evidence type="ECO:0000312" key="16">
    <source>
        <dbReference type="EMBL" id="AAQ03086.1"/>
    </source>
</evidence>
<evidence type="ECO:0000312" key="17">
    <source>
        <dbReference type="EMBL" id="BAC87647.1"/>
    </source>
</evidence>
<evidence type="ECO:0000312" key="18">
    <source>
        <dbReference type="EMBL" id="EAW49099.1"/>
    </source>
</evidence>
<evidence type="ECO:0000312" key="19">
    <source>
        <dbReference type="HGNC" id="HGNC:23612"/>
    </source>
</evidence>
<accession>Q6ZQN7</accession>
<accession>Q86UG5</accession>
<sequence>MKSAKGIENLAFVPSSPDILRRLSASPSQIEVSALSSDPQRENSQPQELQKPQEPQKSPEPSLPSAPPNVSEEKLRSLSLSEFEEGSYGWRNFHPQCLQRCNTPGGFLLHYCLLAVTQGIVVNGLVNISISTVEKRYEMKSSLTGLISSSYDISFCLLSLFVSFFGERGHKPRWLAFAAFMIGLGALVFSLPQFFSGEYKLGSLFEDTCVTTRNSTSCTSSTSSLSNYLYVFILGQLLLGAGGTPLYTLGTAFLDDSVPTHKSSLYIGTGYAMSILGPAIGYVLGGQLLTIYIDVAMGESTDVTEDDPRWLGAWWIGFLLSWIFAWSLIIPFSCFPKHLPGTAEIQAGKTSQAHQSNSNADVKFGKSIKDFPAALKNLMKNAVFMCLVLSTSSEALITTGFATFLPKFIENQFGLTSSFAATLGGAVLIPGAALGQILGGFLVSKFRMTCKNTMKFALFTSGVALTLSFVFMYAKCENEPFAGVSESYNGTGELGNLIAPCNANCNCSRSYYYPVCGDGVQYFSPCFAGCSNPVAHRKPKVYYNCSCIERKTEITSTAETFGFEAKAGKCETHCAKLPIFLCIFFIVIIFTFMAGTPITVSILRCVNHRQRSLALGIQFMVLRLLGTIPGPIIFGFTIDSTCILWDINDCGIKGACWIYDNIKMAHMLVAISVTCKVITMFFNGFAIFLYKPPPSATDVSFHKENAVVTNVLAEQDLNKIVKEG</sequence>